<protein>
    <recommendedName>
        <fullName>V-type proton ATPase catalytic subunit A</fullName>
        <shortName>V-ATPase subunit A</shortName>
        <ecNumber evidence="2">7.1.2.2</ecNumber>
    </recommendedName>
    <alternativeName>
        <fullName>V-ATPase 69 kDa subunit</fullName>
    </alternativeName>
    <alternativeName>
        <fullName>Vacuolar H ATPase protein 13</fullName>
    </alternativeName>
    <alternativeName>
        <fullName>Vacuolar proton pump subunit alpha</fullName>
    </alternativeName>
</protein>
<gene>
    <name evidence="3" type="primary">vha-13</name>
    <name evidence="5" type="ORF">CBG04632</name>
</gene>
<accession>Q61VZ4</accession>
<accession>A8WY40</accession>
<name>VATA_CAEBR</name>
<comment type="function">
    <text evidence="1 3">Catalytic subunit of the V1 complex of vacuolar(H+)-ATPase (V-ATPase), a multisubunit enzyme composed of a peripheral complex (V1) that hydrolyzes ATP and a membrane integral complex (V0) that translocates protons (By similarity). V-ATPase is responsible for acidifying and maintaining the pH of intracellular compartments and in some cell types, is targeted to the plasma membrane, where it is responsible for acidifying the extracellular environment (By similarity). Required along with other vacuolar ATPase components for the removal of protein aggregates which form in immature oocytes in the distal gonad. This removal occurs as the oocytes mature and move to the proximal gonad, is triggered by the introduction of sperm through mating and occurs before fertilization. The introduction of sperm triggers V-ATPase accumulation in proximal oocytes and induces lysosomal acidification which leads to engulfing of protein aggregates by lysosomes and subsequent clearance of the aggregates. Lysosomal acidification also leads to changes in mitochondrial morphology and function. Mitochondria in distal immature oocytes are fragmented, produce high levels of reactive oxygen species (ROS) and have high membrane potential, indicative of metabolic inactivity. In contrast, mitochondria in proximal mature oocytes are tubular with lower ROS levels and membrane potential, indicative of an active metabolic state required for aggregate mobilization before clearance. Involved in receptor-mediated endocytosis (By similarity).</text>
</comment>
<comment type="catalytic activity">
    <reaction evidence="2">
        <text>ATP + H2O + 4 H(+)(in) = ADP + phosphate + 5 H(+)(out)</text>
        <dbReference type="Rhea" id="RHEA:57720"/>
        <dbReference type="ChEBI" id="CHEBI:15377"/>
        <dbReference type="ChEBI" id="CHEBI:15378"/>
        <dbReference type="ChEBI" id="CHEBI:30616"/>
        <dbReference type="ChEBI" id="CHEBI:43474"/>
        <dbReference type="ChEBI" id="CHEBI:456216"/>
        <dbReference type="EC" id="7.1.2.2"/>
    </reaction>
</comment>
<comment type="subunit">
    <text evidence="1">V-ATPase is a heteromultimeric enzyme made up of two complexes: the ATP-hydrolytic V1 complex and the proton translocation V0 complex. The V1 complex consists of three catalytic AB heterodimers that form a heterohexamer, three peripheral stalks each consisting of EG heterodimers, one central rotor including subunits D and F, and the regulatory subunits C and H. The proton translocation complex V0 consists of the proton transport subunit a, a ring of proteolipid subunits c9c'', rotary subunit d, subunits e and f, and the accessory subunits vah-19/Ac45 and vah-20/PRR.</text>
</comment>
<comment type="similarity">
    <text evidence="4">Belongs to the ATPase alpha/beta chains family.</text>
</comment>
<dbReference type="EC" id="7.1.2.2" evidence="2"/>
<dbReference type="EMBL" id="HE601135">
    <property type="protein sequence ID" value="CAP25300.3"/>
    <property type="molecule type" value="Genomic_DNA"/>
</dbReference>
<dbReference type="SMR" id="Q61VZ4"/>
<dbReference type="FunCoup" id="Q61VZ4">
    <property type="interactions" value="2875"/>
</dbReference>
<dbReference type="STRING" id="6238.Q61VZ4"/>
<dbReference type="EnsemblMetazoa" id="CBG04632a.1">
    <property type="protein sequence ID" value="CBG04632a.1"/>
    <property type="gene ID" value="WBGene00027269"/>
</dbReference>
<dbReference type="EnsemblMetazoa" id="CBG04632b.1">
    <property type="protein sequence ID" value="CBG04632b.1"/>
    <property type="gene ID" value="WBGene00027269"/>
</dbReference>
<dbReference type="KEGG" id="cbr:CBG_04632"/>
<dbReference type="CTD" id="8579838"/>
<dbReference type="WormBase" id="CBG04632a">
    <property type="protein sequence ID" value="CBP01281"/>
    <property type="gene ID" value="WBGene00027269"/>
    <property type="gene designation" value="Cbr-vha-13"/>
</dbReference>
<dbReference type="eggNOG" id="KOG1352">
    <property type="taxonomic scope" value="Eukaryota"/>
</dbReference>
<dbReference type="HOGENOM" id="CLU_008162_3_1_1"/>
<dbReference type="InParanoid" id="Q61VZ4"/>
<dbReference type="OMA" id="RIVKTFW"/>
<dbReference type="OrthoDB" id="1676488at2759"/>
<dbReference type="Proteomes" id="UP000008549">
    <property type="component" value="Unassembled WGS sequence"/>
</dbReference>
<dbReference type="GO" id="GO:0033180">
    <property type="term" value="C:proton-transporting V-type ATPase, V1 domain"/>
    <property type="evidence" value="ECO:0007669"/>
    <property type="project" value="InterPro"/>
</dbReference>
<dbReference type="GO" id="GO:0005524">
    <property type="term" value="F:ATP binding"/>
    <property type="evidence" value="ECO:0007669"/>
    <property type="project" value="UniProtKB-KW"/>
</dbReference>
<dbReference type="GO" id="GO:0016887">
    <property type="term" value="F:ATP hydrolysis activity"/>
    <property type="evidence" value="ECO:0007669"/>
    <property type="project" value="InterPro"/>
</dbReference>
<dbReference type="GO" id="GO:0046961">
    <property type="term" value="F:proton-transporting ATPase activity, rotational mechanism"/>
    <property type="evidence" value="ECO:0000318"/>
    <property type="project" value="GO_Central"/>
</dbReference>
<dbReference type="GO" id="GO:0046034">
    <property type="term" value="P:ATP metabolic process"/>
    <property type="evidence" value="ECO:0007669"/>
    <property type="project" value="InterPro"/>
</dbReference>
<dbReference type="GO" id="GO:0007042">
    <property type="term" value="P:lysosomal lumen acidification"/>
    <property type="evidence" value="ECO:0000250"/>
    <property type="project" value="UniProtKB"/>
</dbReference>
<dbReference type="GO" id="GO:1902600">
    <property type="term" value="P:proton transmembrane transport"/>
    <property type="evidence" value="ECO:0000318"/>
    <property type="project" value="GO_Central"/>
</dbReference>
<dbReference type="CDD" id="cd18111">
    <property type="entry name" value="ATP-synt_V_A-type_alpha_C"/>
    <property type="match status" value="1"/>
</dbReference>
<dbReference type="CDD" id="cd18119">
    <property type="entry name" value="ATP-synt_V_A-type_alpha_N"/>
    <property type="match status" value="1"/>
</dbReference>
<dbReference type="CDD" id="cd01134">
    <property type="entry name" value="V_A-ATPase_A"/>
    <property type="match status" value="1"/>
</dbReference>
<dbReference type="FunFam" id="1.10.1140.10:FF:000002">
    <property type="entry name" value="V-type proton ATPase catalytic subunit A"/>
    <property type="match status" value="1"/>
</dbReference>
<dbReference type="FunFam" id="2.40.30.20:FF:000002">
    <property type="entry name" value="V-type proton ATPase catalytic subunit A"/>
    <property type="match status" value="1"/>
</dbReference>
<dbReference type="FunFam" id="2.40.50.100:FF:000008">
    <property type="entry name" value="V-type proton ATPase catalytic subunit A"/>
    <property type="match status" value="1"/>
</dbReference>
<dbReference type="FunFam" id="3.40.50.300:FF:000052">
    <property type="entry name" value="V-type proton ATPase catalytic subunit A"/>
    <property type="match status" value="1"/>
</dbReference>
<dbReference type="Gene3D" id="2.40.30.20">
    <property type="match status" value="1"/>
</dbReference>
<dbReference type="Gene3D" id="2.40.50.100">
    <property type="match status" value="1"/>
</dbReference>
<dbReference type="Gene3D" id="1.10.1140.10">
    <property type="entry name" value="Bovine Mitochondrial F1-atpase, Atp Synthase Beta Chain, Chain D, domain 3"/>
    <property type="match status" value="1"/>
</dbReference>
<dbReference type="Gene3D" id="3.40.50.300">
    <property type="entry name" value="P-loop containing nucleotide triphosphate hydrolases"/>
    <property type="match status" value="1"/>
</dbReference>
<dbReference type="HAMAP" id="MF_00309">
    <property type="entry name" value="ATP_synth_A_arch"/>
    <property type="match status" value="1"/>
</dbReference>
<dbReference type="InterPro" id="IPR055190">
    <property type="entry name" value="ATP-synt_VA_C"/>
</dbReference>
<dbReference type="InterPro" id="IPR031686">
    <property type="entry name" value="ATP-synth_a_Xtn"/>
</dbReference>
<dbReference type="InterPro" id="IPR023366">
    <property type="entry name" value="ATP_synth_asu-like_sf"/>
</dbReference>
<dbReference type="InterPro" id="IPR020003">
    <property type="entry name" value="ATPase_a/bsu_AS"/>
</dbReference>
<dbReference type="InterPro" id="IPR004100">
    <property type="entry name" value="ATPase_F1/V1/A1_a/bsu_N"/>
</dbReference>
<dbReference type="InterPro" id="IPR036121">
    <property type="entry name" value="ATPase_F1/V1/A1_a/bsu_N_sf"/>
</dbReference>
<dbReference type="InterPro" id="IPR000194">
    <property type="entry name" value="ATPase_F1/V1/A1_a/bsu_nucl-bd"/>
</dbReference>
<dbReference type="InterPro" id="IPR024034">
    <property type="entry name" value="ATPase_F1/V1_b/a_C"/>
</dbReference>
<dbReference type="InterPro" id="IPR005725">
    <property type="entry name" value="ATPase_V1-cplx_asu"/>
</dbReference>
<dbReference type="InterPro" id="IPR027417">
    <property type="entry name" value="P-loop_NTPase"/>
</dbReference>
<dbReference type="InterPro" id="IPR022878">
    <property type="entry name" value="V-ATPase_asu"/>
</dbReference>
<dbReference type="NCBIfam" id="NF003220">
    <property type="entry name" value="PRK04192.1"/>
    <property type="match status" value="1"/>
</dbReference>
<dbReference type="NCBIfam" id="TIGR01042">
    <property type="entry name" value="V-ATPase_V1_A"/>
    <property type="match status" value="1"/>
</dbReference>
<dbReference type="PANTHER" id="PTHR43607:SF1">
    <property type="entry name" value="H(+)-TRANSPORTING TWO-SECTOR ATPASE"/>
    <property type="match status" value="1"/>
</dbReference>
<dbReference type="PANTHER" id="PTHR43607">
    <property type="entry name" value="V-TYPE PROTON ATPASE CATALYTIC SUBUNIT A"/>
    <property type="match status" value="1"/>
</dbReference>
<dbReference type="Pfam" id="PF00006">
    <property type="entry name" value="ATP-synt_ab"/>
    <property type="match status" value="1"/>
</dbReference>
<dbReference type="Pfam" id="PF02874">
    <property type="entry name" value="ATP-synt_ab_N"/>
    <property type="match status" value="1"/>
</dbReference>
<dbReference type="Pfam" id="PF16886">
    <property type="entry name" value="ATP-synt_ab_Xtn"/>
    <property type="match status" value="1"/>
</dbReference>
<dbReference type="Pfam" id="PF22919">
    <property type="entry name" value="ATP-synt_VA_C"/>
    <property type="match status" value="1"/>
</dbReference>
<dbReference type="SUPFAM" id="SSF47917">
    <property type="entry name" value="C-terminal domain of alpha and beta subunits of F1 ATP synthase"/>
    <property type="match status" value="1"/>
</dbReference>
<dbReference type="SUPFAM" id="SSF50615">
    <property type="entry name" value="N-terminal domain of alpha and beta subunits of F1 ATP synthase"/>
    <property type="match status" value="1"/>
</dbReference>
<dbReference type="SUPFAM" id="SSF52540">
    <property type="entry name" value="P-loop containing nucleoside triphosphate hydrolases"/>
    <property type="match status" value="1"/>
</dbReference>
<dbReference type="PROSITE" id="PS00152">
    <property type="entry name" value="ATPASE_ALPHA_BETA"/>
    <property type="match status" value="1"/>
</dbReference>
<sequence length="606" mass="66493">MAAESSYGFVYGVSGPVVTAEKMAGSAMYELVRVGHQELVGEIIRLEGDYATIQVYEETSGVTIGDPVLRTGKPLSVELGPGIMGSIFDGIQRPLKDIADITQSIYIPKGVSTNALSREARWDFVVSKDLRVGGHVTGGDIVGTVDENLLIKHKILLPPSACGTVTFVAPSGQYTVEDTLLELEFAGRKQKFSMLQVWPVRNPRPVTEKLAANNPLLCGQRVLDALFPCVQGGTTAIPGAFGCGKTVISQSLSKYSNSDAIIYVGCGERGNEMSEVLRDFPELTMEVNGTTTSIMKRTALVANTSNMPVAAREASIYTGITLAEYFRDMGLNVAMMADSTSRWAEALREISGRLGEMPADSGYPAYLAARLASFYERAGRVKCLGSPEREGSVTIVGAVSPPGGDFADPVTSATLGIVQVFWGLDKKLAQRKHFPSINWLISYSKYMRALEEFYEKNYPEFVHLRTKCKEILQEEEDLSEIVQLVGKASLAESDKITLEVAKIIKDDFLQQNGYTPYDRFCPFYKTVGMLKNMIGFYDLARHSVEATAQSENKITWNVIKDNMGDLIYQLSAMKFKDPVADGEAKIRKDYDDLAEAMANGFRNLED</sequence>
<feature type="chain" id="PRO_0000232902" description="V-type proton ATPase catalytic subunit A">
    <location>
        <begin position="1"/>
        <end position="606"/>
    </location>
</feature>
<feature type="binding site" evidence="4">
    <location>
        <begin position="239"/>
        <end position="246"/>
    </location>
    <ligand>
        <name>ATP</name>
        <dbReference type="ChEBI" id="CHEBI:30616"/>
    </ligand>
</feature>
<reference key="1">
    <citation type="journal article" date="2003" name="PLoS Biol.">
        <title>The genome sequence of Caenorhabditis briggsae: a platform for comparative genomics.</title>
        <authorList>
            <person name="Stein L.D."/>
            <person name="Bao Z."/>
            <person name="Blasiar D."/>
            <person name="Blumenthal T."/>
            <person name="Brent M.R."/>
            <person name="Chen N."/>
            <person name="Chinwalla A."/>
            <person name="Clarke L."/>
            <person name="Clee C."/>
            <person name="Coghlan A."/>
            <person name="Coulson A."/>
            <person name="D'Eustachio P."/>
            <person name="Fitch D.H.A."/>
            <person name="Fulton L.A."/>
            <person name="Fulton R.E."/>
            <person name="Griffiths-Jones S."/>
            <person name="Harris T.W."/>
            <person name="Hillier L.W."/>
            <person name="Kamath R."/>
            <person name="Kuwabara P.E."/>
            <person name="Mardis E.R."/>
            <person name="Marra M.A."/>
            <person name="Miner T.L."/>
            <person name="Minx P."/>
            <person name="Mullikin J.C."/>
            <person name="Plumb R.W."/>
            <person name="Rogers J."/>
            <person name="Schein J.E."/>
            <person name="Sohrmann M."/>
            <person name="Spieth J."/>
            <person name="Stajich J.E."/>
            <person name="Wei C."/>
            <person name="Willey D."/>
            <person name="Wilson R.K."/>
            <person name="Durbin R.M."/>
            <person name="Waterston R.H."/>
        </authorList>
    </citation>
    <scope>NUCLEOTIDE SEQUENCE [LARGE SCALE GENOMIC DNA]</scope>
    <source>
        <strain>AF16</strain>
    </source>
</reference>
<organism>
    <name type="scientific">Caenorhabditis briggsae</name>
    <dbReference type="NCBI Taxonomy" id="6238"/>
    <lineage>
        <taxon>Eukaryota</taxon>
        <taxon>Metazoa</taxon>
        <taxon>Ecdysozoa</taxon>
        <taxon>Nematoda</taxon>
        <taxon>Chromadorea</taxon>
        <taxon>Rhabditida</taxon>
        <taxon>Rhabditina</taxon>
        <taxon>Rhabditomorpha</taxon>
        <taxon>Rhabditoidea</taxon>
        <taxon>Rhabditidae</taxon>
        <taxon>Peloderinae</taxon>
        <taxon>Caenorhabditis</taxon>
    </lineage>
</organism>
<evidence type="ECO:0000250" key="1">
    <source>
        <dbReference type="UniProtKB" id="P31404"/>
    </source>
</evidence>
<evidence type="ECO:0000250" key="2">
    <source>
        <dbReference type="UniProtKB" id="P50516"/>
    </source>
</evidence>
<evidence type="ECO:0000250" key="3">
    <source>
        <dbReference type="UniProtKB" id="Q9XW92"/>
    </source>
</evidence>
<evidence type="ECO:0000255" key="4"/>
<evidence type="ECO:0000312" key="5">
    <source>
        <dbReference type="WormBase" id="CBG04632a"/>
    </source>
</evidence>
<keyword id="KW-0067">ATP-binding</keyword>
<keyword id="KW-0375">Hydrogen ion transport</keyword>
<keyword id="KW-0406">Ion transport</keyword>
<keyword id="KW-0547">Nucleotide-binding</keyword>
<keyword id="KW-1185">Reference proteome</keyword>
<keyword id="KW-1278">Translocase</keyword>
<keyword id="KW-0813">Transport</keyword>
<proteinExistence type="inferred from homology"/>